<feature type="chain" id="PRO_1000013474" description="Large ribosomal subunit protein bL34">
    <location>
        <begin position="1"/>
        <end position="46"/>
    </location>
</feature>
<protein>
    <recommendedName>
        <fullName evidence="1">Large ribosomal subunit protein bL34</fullName>
    </recommendedName>
    <alternativeName>
        <fullName evidence="2">50S ribosomal protein L34</fullName>
    </alternativeName>
</protein>
<gene>
    <name evidence="1" type="primary">rpmH</name>
    <name evidence="1" type="synonym">rpl34</name>
    <name type="ordered locus">CYB_2942</name>
</gene>
<sequence>MTQRTLRGTNRRRIRVSGFRARMRTATGRQVLRRRRAKGRYRLAVS</sequence>
<dbReference type="EMBL" id="CP000240">
    <property type="protein sequence ID" value="ABD03861.1"/>
    <property type="molecule type" value="Genomic_DNA"/>
</dbReference>
<dbReference type="RefSeq" id="WP_011434477.1">
    <property type="nucleotide sequence ID" value="NC_007776.1"/>
</dbReference>
<dbReference type="SMR" id="Q2JHS2"/>
<dbReference type="STRING" id="321332.CYB_2942"/>
<dbReference type="KEGG" id="cyb:CYB_2942"/>
<dbReference type="eggNOG" id="COG0230">
    <property type="taxonomic scope" value="Bacteria"/>
</dbReference>
<dbReference type="HOGENOM" id="CLU_129938_2_1_3"/>
<dbReference type="Proteomes" id="UP000001938">
    <property type="component" value="Chromosome"/>
</dbReference>
<dbReference type="GO" id="GO:1990904">
    <property type="term" value="C:ribonucleoprotein complex"/>
    <property type="evidence" value="ECO:0007669"/>
    <property type="project" value="UniProtKB-KW"/>
</dbReference>
<dbReference type="GO" id="GO:0005840">
    <property type="term" value="C:ribosome"/>
    <property type="evidence" value="ECO:0007669"/>
    <property type="project" value="UniProtKB-KW"/>
</dbReference>
<dbReference type="GO" id="GO:0003735">
    <property type="term" value="F:structural constituent of ribosome"/>
    <property type="evidence" value="ECO:0007669"/>
    <property type="project" value="InterPro"/>
</dbReference>
<dbReference type="GO" id="GO:0006412">
    <property type="term" value="P:translation"/>
    <property type="evidence" value="ECO:0007669"/>
    <property type="project" value="UniProtKB-UniRule"/>
</dbReference>
<dbReference type="Gene3D" id="1.10.287.3980">
    <property type="match status" value="1"/>
</dbReference>
<dbReference type="HAMAP" id="MF_00391">
    <property type="entry name" value="Ribosomal_bL34"/>
    <property type="match status" value="1"/>
</dbReference>
<dbReference type="InterPro" id="IPR000271">
    <property type="entry name" value="Ribosomal_bL34"/>
</dbReference>
<dbReference type="NCBIfam" id="TIGR01030">
    <property type="entry name" value="rpmH_bact"/>
    <property type="match status" value="1"/>
</dbReference>
<dbReference type="Pfam" id="PF00468">
    <property type="entry name" value="Ribosomal_L34"/>
    <property type="match status" value="1"/>
</dbReference>
<comment type="similarity">
    <text evidence="1">Belongs to the bacterial ribosomal protein bL34 family.</text>
</comment>
<organism>
    <name type="scientific">Synechococcus sp. (strain JA-2-3B'a(2-13))</name>
    <name type="common">Cyanobacteria bacterium Yellowstone B-Prime</name>
    <dbReference type="NCBI Taxonomy" id="321332"/>
    <lineage>
        <taxon>Bacteria</taxon>
        <taxon>Bacillati</taxon>
        <taxon>Cyanobacteriota</taxon>
        <taxon>Cyanophyceae</taxon>
        <taxon>Synechococcales</taxon>
        <taxon>Synechococcaceae</taxon>
        <taxon>Synechococcus</taxon>
    </lineage>
</organism>
<evidence type="ECO:0000255" key="1">
    <source>
        <dbReference type="HAMAP-Rule" id="MF_00391"/>
    </source>
</evidence>
<evidence type="ECO:0000305" key="2"/>
<keyword id="KW-1185">Reference proteome</keyword>
<keyword id="KW-0687">Ribonucleoprotein</keyword>
<keyword id="KW-0689">Ribosomal protein</keyword>
<reference key="1">
    <citation type="journal article" date="2007" name="ISME J.">
        <title>Population level functional diversity in a microbial community revealed by comparative genomic and metagenomic analyses.</title>
        <authorList>
            <person name="Bhaya D."/>
            <person name="Grossman A.R."/>
            <person name="Steunou A.-S."/>
            <person name="Khuri N."/>
            <person name="Cohan F.M."/>
            <person name="Hamamura N."/>
            <person name="Melendrez M.C."/>
            <person name="Bateson M.M."/>
            <person name="Ward D.M."/>
            <person name="Heidelberg J.F."/>
        </authorList>
    </citation>
    <scope>NUCLEOTIDE SEQUENCE [LARGE SCALE GENOMIC DNA]</scope>
    <source>
        <strain>JA-2-3B'a(2-13)</strain>
    </source>
</reference>
<accession>Q2JHS2</accession>
<proteinExistence type="inferred from homology"/>
<name>RL34_SYNJB</name>